<dbReference type="EC" id="3.5.4.2" evidence="1"/>
<dbReference type="EMBL" id="CP000075">
    <property type="protein sequence ID" value="AAY35731.1"/>
    <property type="molecule type" value="Genomic_DNA"/>
</dbReference>
<dbReference type="RefSeq" id="WP_011266547.1">
    <property type="nucleotide sequence ID" value="NC_007005.1"/>
</dbReference>
<dbReference type="RefSeq" id="YP_233769.1">
    <property type="nucleotide sequence ID" value="NC_007005.1"/>
</dbReference>
<dbReference type="SMR" id="Q4ZYP1"/>
<dbReference type="STRING" id="205918.Psyr_0661"/>
<dbReference type="KEGG" id="psb:Psyr_0661"/>
<dbReference type="PATRIC" id="fig|205918.7.peg.686"/>
<dbReference type="eggNOG" id="COG1816">
    <property type="taxonomic scope" value="Bacteria"/>
</dbReference>
<dbReference type="HOGENOM" id="CLU_039228_7_0_6"/>
<dbReference type="OrthoDB" id="105475at2"/>
<dbReference type="Proteomes" id="UP000000426">
    <property type="component" value="Chromosome"/>
</dbReference>
<dbReference type="GO" id="GO:0005829">
    <property type="term" value="C:cytosol"/>
    <property type="evidence" value="ECO:0007669"/>
    <property type="project" value="TreeGrafter"/>
</dbReference>
<dbReference type="GO" id="GO:0000034">
    <property type="term" value="F:adenine deaminase activity"/>
    <property type="evidence" value="ECO:0007669"/>
    <property type="project" value="UniProtKB-UniRule"/>
</dbReference>
<dbReference type="GO" id="GO:0008270">
    <property type="term" value="F:zinc ion binding"/>
    <property type="evidence" value="ECO:0007669"/>
    <property type="project" value="UniProtKB-UniRule"/>
</dbReference>
<dbReference type="GO" id="GO:0006146">
    <property type="term" value="P:adenine catabolic process"/>
    <property type="evidence" value="ECO:0007669"/>
    <property type="project" value="UniProtKB-UniRule"/>
</dbReference>
<dbReference type="GO" id="GO:0043103">
    <property type="term" value="P:hypoxanthine salvage"/>
    <property type="evidence" value="ECO:0007669"/>
    <property type="project" value="UniProtKB-UniRule"/>
</dbReference>
<dbReference type="GO" id="GO:0009117">
    <property type="term" value="P:nucleotide metabolic process"/>
    <property type="evidence" value="ECO:0007669"/>
    <property type="project" value="UniProtKB-KW"/>
</dbReference>
<dbReference type="CDD" id="cd01320">
    <property type="entry name" value="ADA"/>
    <property type="match status" value="1"/>
</dbReference>
<dbReference type="FunFam" id="3.20.20.140:FF:000039">
    <property type="entry name" value="Adenine deaminase"/>
    <property type="match status" value="1"/>
</dbReference>
<dbReference type="Gene3D" id="3.20.20.140">
    <property type="entry name" value="Metal-dependent hydrolases"/>
    <property type="match status" value="1"/>
</dbReference>
<dbReference type="HAMAP" id="MF_01962">
    <property type="entry name" value="Adenine_deaminase"/>
    <property type="match status" value="1"/>
</dbReference>
<dbReference type="InterPro" id="IPR001365">
    <property type="entry name" value="A_deaminase_dom"/>
</dbReference>
<dbReference type="InterPro" id="IPR028892">
    <property type="entry name" value="ADE"/>
</dbReference>
<dbReference type="InterPro" id="IPR006330">
    <property type="entry name" value="Ado/ade_deaminase"/>
</dbReference>
<dbReference type="InterPro" id="IPR032466">
    <property type="entry name" value="Metal_Hydrolase"/>
</dbReference>
<dbReference type="NCBIfam" id="TIGR01430">
    <property type="entry name" value="aden_deam"/>
    <property type="match status" value="1"/>
</dbReference>
<dbReference type="NCBIfam" id="NF006850">
    <property type="entry name" value="PRK09358.1-6"/>
    <property type="match status" value="1"/>
</dbReference>
<dbReference type="PANTHER" id="PTHR43114">
    <property type="entry name" value="ADENINE DEAMINASE"/>
    <property type="match status" value="1"/>
</dbReference>
<dbReference type="PANTHER" id="PTHR43114:SF6">
    <property type="entry name" value="ADENINE DEAMINASE"/>
    <property type="match status" value="1"/>
</dbReference>
<dbReference type="Pfam" id="PF00962">
    <property type="entry name" value="A_deaminase"/>
    <property type="match status" value="1"/>
</dbReference>
<dbReference type="SUPFAM" id="SSF51556">
    <property type="entry name" value="Metallo-dependent hydrolases"/>
    <property type="match status" value="1"/>
</dbReference>
<name>ADE_PSEU2</name>
<gene>
    <name type="ordered locus">Psyr_0661</name>
</gene>
<organism>
    <name type="scientific">Pseudomonas syringae pv. syringae (strain B728a)</name>
    <dbReference type="NCBI Taxonomy" id="205918"/>
    <lineage>
        <taxon>Bacteria</taxon>
        <taxon>Pseudomonadati</taxon>
        <taxon>Pseudomonadota</taxon>
        <taxon>Gammaproteobacteria</taxon>
        <taxon>Pseudomonadales</taxon>
        <taxon>Pseudomonadaceae</taxon>
        <taxon>Pseudomonas</taxon>
        <taxon>Pseudomonas syringae</taxon>
    </lineage>
</organism>
<comment type="function">
    <text evidence="1">Catalyzes the hydrolytic deamination of adenine to hypoxanthine. Plays an important role in the purine salvage pathway and in nitrogen catabolism.</text>
</comment>
<comment type="catalytic activity">
    <reaction evidence="1">
        <text>adenine + H2O + H(+) = hypoxanthine + NH4(+)</text>
        <dbReference type="Rhea" id="RHEA:23688"/>
        <dbReference type="ChEBI" id="CHEBI:15377"/>
        <dbReference type="ChEBI" id="CHEBI:15378"/>
        <dbReference type="ChEBI" id="CHEBI:16708"/>
        <dbReference type="ChEBI" id="CHEBI:17368"/>
        <dbReference type="ChEBI" id="CHEBI:28938"/>
        <dbReference type="EC" id="3.5.4.2"/>
    </reaction>
</comment>
<comment type="cofactor">
    <cofactor evidence="1">
        <name>Zn(2+)</name>
        <dbReference type="ChEBI" id="CHEBI:29105"/>
    </cofactor>
    <text evidence="1">Binds 1 zinc ion per subunit.</text>
</comment>
<comment type="similarity">
    <text evidence="1">Belongs to the metallo-dependent hydrolases superfamily. Adenosine and AMP deaminases family. Adenine deaminase type 2 subfamily.</text>
</comment>
<evidence type="ECO:0000255" key="1">
    <source>
        <dbReference type="HAMAP-Rule" id="MF_01962"/>
    </source>
</evidence>
<proteinExistence type="inferred from homology"/>
<protein>
    <recommendedName>
        <fullName evidence="1">Adenine deaminase</fullName>
        <shortName evidence="1">ADE</shortName>
        <ecNumber evidence="1">3.5.4.2</ecNumber>
    </recommendedName>
    <alternativeName>
        <fullName evidence="1">Adenine aminohydrolase</fullName>
        <shortName evidence="1">AAH</shortName>
    </alternativeName>
</protein>
<sequence>MYDWLNALPKAELHLHLEGSLEPELLFALAERNRIALPWDDVETLRKAYAFNNLQEFLDLYYRGADVLRTEQDFYDLTWAYLLRCKAQNVVHTEPFFDPQTHTDRGIPFEVVLAGITGALKDGKSKLGVDSGLILSFLRHLSQEEAEKTLDQALPFRDAFVAVGLDSSEMGHPPSKFQRVFDRARNEGFLTVAHAGEEGPPEYIWEALDLLKIQRIDHGVRAIEDERLMQRIIDEQIPLTVCPLSNTKLCVFDDMAQHNILDMLERGVKVTVNSDDPAYFGGYVTENFHALYTHLGMTEDQAKRLAQNSLDARLVKP</sequence>
<keyword id="KW-0378">Hydrolase</keyword>
<keyword id="KW-0479">Metal-binding</keyword>
<keyword id="KW-0546">Nucleotide metabolism</keyword>
<keyword id="KW-0862">Zinc</keyword>
<accession>Q4ZYP1</accession>
<reference key="1">
    <citation type="journal article" date="2005" name="Proc. Natl. Acad. Sci. U.S.A.">
        <title>Comparison of the complete genome sequences of Pseudomonas syringae pv. syringae B728a and pv. tomato DC3000.</title>
        <authorList>
            <person name="Feil H."/>
            <person name="Feil W.S."/>
            <person name="Chain P."/>
            <person name="Larimer F."/>
            <person name="Dibartolo G."/>
            <person name="Copeland A."/>
            <person name="Lykidis A."/>
            <person name="Trong S."/>
            <person name="Nolan M."/>
            <person name="Goltsman E."/>
            <person name="Thiel J."/>
            <person name="Malfatti S."/>
            <person name="Loper J.E."/>
            <person name="Lapidus A."/>
            <person name="Detter J.C."/>
            <person name="Land M."/>
            <person name="Richardson P.M."/>
            <person name="Kyrpides N.C."/>
            <person name="Ivanova N."/>
            <person name="Lindow S.E."/>
        </authorList>
    </citation>
    <scope>NUCLEOTIDE SEQUENCE [LARGE SCALE GENOMIC DNA]</scope>
    <source>
        <strain>B728a</strain>
    </source>
</reference>
<feature type="chain" id="PRO_1000017684" description="Adenine deaminase">
    <location>
        <begin position="1"/>
        <end position="317"/>
    </location>
</feature>
<feature type="active site" description="Proton donor" evidence="1">
    <location>
        <position position="197"/>
    </location>
</feature>
<feature type="binding site" evidence="1">
    <location>
        <position position="14"/>
    </location>
    <ligand>
        <name>Zn(2+)</name>
        <dbReference type="ChEBI" id="CHEBI:29105"/>
        <note>catalytic</note>
    </ligand>
</feature>
<feature type="binding site" evidence="1">
    <location>
        <position position="16"/>
    </location>
    <ligand>
        <name>Zn(2+)</name>
        <dbReference type="ChEBI" id="CHEBI:29105"/>
        <note>catalytic</note>
    </ligand>
</feature>
<feature type="binding site" evidence="1">
    <location>
        <position position="194"/>
    </location>
    <ligand>
        <name>Zn(2+)</name>
        <dbReference type="ChEBI" id="CHEBI:29105"/>
        <note>catalytic</note>
    </ligand>
</feature>
<feature type="binding site" evidence="1">
    <location>
        <position position="275"/>
    </location>
    <ligand>
        <name>Zn(2+)</name>
        <dbReference type="ChEBI" id="CHEBI:29105"/>
        <note>catalytic</note>
    </ligand>
</feature>
<feature type="binding site" evidence="1">
    <location>
        <position position="276"/>
    </location>
    <ligand>
        <name>substrate</name>
    </ligand>
</feature>
<feature type="site" description="Important for catalytic activity" evidence="1">
    <location>
        <position position="218"/>
    </location>
</feature>